<feature type="chain" id="PRO_0000459092" description="Glycine betaine monooxygenase oxygenase subunit">
    <location>
        <begin position="1"/>
        <end position="445"/>
    </location>
</feature>
<feature type="domain" description="Rieske" evidence="2">
    <location>
        <begin position="73"/>
        <end position="180"/>
    </location>
</feature>
<feature type="binding site" evidence="2">
    <location>
        <position position="115"/>
    </location>
    <ligand>
        <name>[2Fe-2S] cluster</name>
        <dbReference type="ChEBI" id="CHEBI:190135"/>
    </ligand>
</feature>
<feature type="binding site" evidence="2">
    <location>
        <position position="117"/>
    </location>
    <ligand>
        <name>[2Fe-2S] cluster</name>
        <dbReference type="ChEBI" id="CHEBI:190135"/>
    </ligand>
</feature>
<feature type="binding site" evidence="2">
    <location>
        <position position="135"/>
    </location>
    <ligand>
        <name>[2Fe-2S] cluster</name>
        <dbReference type="ChEBI" id="CHEBI:190135"/>
    </ligand>
</feature>
<feature type="binding site" evidence="2">
    <location>
        <position position="138"/>
    </location>
    <ligand>
        <name>[2Fe-2S] cluster</name>
        <dbReference type="ChEBI" id="CHEBI:190135"/>
    </ligand>
</feature>
<feature type="binding site" evidence="1">
    <location>
        <position position="234"/>
    </location>
    <ligand>
        <name>Fe cation</name>
        <dbReference type="ChEBI" id="CHEBI:24875"/>
    </ligand>
</feature>
<feature type="binding site" evidence="1">
    <location>
        <position position="239"/>
    </location>
    <ligand>
        <name>Fe cation</name>
        <dbReference type="ChEBI" id="CHEBI:24875"/>
    </ligand>
</feature>
<reference key="1">
    <citation type="journal article" date="2011" name="Stand. Genomic Sci.">
        <title>Complete genome sequence of the halophilic and highly halotolerant Chromohalobacter salexigens type strain (1H11(T)).</title>
        <authorList>
            <person name="Copeland A."/>
            <person name="O'Connor K."/>
            <person name="Lucas S."/>
            <person name="Lapidus A."/>
            <person name="Berry K.W."/>
            <person name="Detter J.C."/>
            <person name="Del Rio T.G."/>
            <person name="Hammon N."/>
            <person name="Dalin E."/>
            <person name="Tice H."/>
            <person name="Pitluck S."/>
            <person name="Bruce D."/>
            <person name="Goodwin L."/>
            <person name="Han C."/>
            <person name="Tapia R."/>
            <person name="Saunders E."/>
            <person name="Schmutz J."/>
            <person name="Brettin T."/>
            <person name="Larimer F."/>
            <person name="Land M."/>
            <person name="Hauser L."/>
            <person name="Vargas C."/>
            <person name="Nieto J.J."/>
            <person name="Kyrpides N.C."/>
            <person name="Ivanova N."/>
            <person name="Goker M."/>
            <person name="Klenk H.P."/>
            <person name="Csonka L.N."/>
            <person name="Woyke T."/>
        </authorList>
    </citation>
    <scope>NUCLEOTIDE SEQUENCE [LARGE SCALE GENOMIC DNA]</scope>
    <source>
        <strain>ATCC BAA-138 / DSM 3043 / CIP 106854 / NCIMB 13768 / 1H11</strain>
    </source>
</reference>
<reference key="2">
    <citation type="journal article" date="2018" name="Appl. Environ. Microbiol.">
        <title>Glycine betaine monooxygenase, an unusual Rieske-type oxygenase system, catalyzes the oxidative N-demethylation of glycine betaine in Chromohalobacter salexigens DSM 3043.</title>
        <authorList>
            <person name="Shao Y.H."/>
            <person name="Guo L.Z."/>
            <person name="Zhang Y.Q."/>
            <person name="Yu H."/>
            <person name="Zhao B.S."/>
            <person name="Pang H.Q."/>
            <person name="Lu W.D."/>
        </authorList>
    </citation>
    <scope>FUNCTION</scope>
    <scope>CATALYTIC ACTIVITY</scope>
    <scope>COFACTOR</scope>
    <scope>ACTIVITY REGULATION</scope>
    <scope>BIOPHYSICOCHEMICAL PROPERTIES</scope>
    <scope>SUBUNIT</scope>
    <scope>DISRUPTION PHENOTYPE</scope>
    <source>
        <strain>ATCC BAA-138 / DSM 3043 / CIP 106854 / NCIMB 13768 / 1H11</strain>
    </source>
</reference>
<proteinExistence type="evidence at protein level"/>
<accession>Q1QYU7</accession>
<sequence length="445" mass="50393">MSLAPSVIEPAHEEDAFMDLLATSALDDPLAAARDATADMLRQRQGDHSLPQPFYNDPRVFALEMREIFEHEWLFVGMTCEIPAKGNYLTVQIGDNPIIVVRGDQGTIHAFHNVCRHRGSRLCTQAKGKVAKLVCPYHQWTYELDGRLLFAGQDMGEDFDLGAHGLKPVAVTHAGGFLFVSLADQPPAIDDFLATLDDYLAPYEMDNVKVAAESNIVEQANWKLVIENNRECYHCNGAHPELLNSLIEYDDTDDPRATPAYRDLVARQQAHWEQQQVPWALKRFGKRNRLTRTPMIEGVVSMTMDGRPASQRLMGRLPNPDMGSLRILHLPNSWNHFMGDHAVVFRVLPLGPQQTLVTTKWLVHRDAQEGVDYDPEWMRKVWDATTDQDRQLAEENQRGINSVAYQPGPYSRTYEFGVIDFVDWYSDTMLSRLDAEAPSLHIVQG</sequence>
<keyword id="KW-0001">2Fe-2S</keyword>
<keyword id="KW-0408">Iron</keyword>
<keyword id="KW-0411">Iron-sulfur</keyword>
<keyword id="KW-0479">Metal-binding</keyword>
<keyword id="KW-0503">Monooxygenase</keyword>
<keyword id="KW-0520">NAD</keyword>
<keyword id="KW-0560">Oxidoreductase</keyword>
<keyword id="KW-1185">Reference proteome</keyword>
<name>GBMOO_CHRSD</name>
<protein>
    <recommendedName>
        <fullName evidence="5">Glycine betaine monooxygenase oxygenase subunit</fullName>
        <shortName evidence="5">BMO oxygenase subunit</shortName>
        <shortName evidence="5">GB monooxygenase oxygenase subunit</shortName>
        <ecNumber evidence="3">1.14.13.251</ecNumber>
    </recommendedName>
    <alternativeName>
        <fullName evidence="4">BMO Rieske-type oxygenase component</fullName>
    </alternativeName>
</protein>
<organism>
    <name type="scientific">Chromohalobacter salexigens (strain ATCC BAA-138 / DSM 3043 / CIP 106854 / NCIMB 13768 / 1H11)</name>
    <dbReference type="NCBI Taxonomy" id="290398"/>
    <lineage>
        <taxon>Bacteria</taxon>
        <taxon>Pseudomonadati</taxon>
        <taxon>Pseudomonadota</taxon>
        <taxon>Gammaproteobacteria</taxon>
        <taxon>Oceanospirillales</taxon>
        <taxon>Halomonadaceae</taxon>
        <taxon>Chromohalobacter</taxon>
    </lineage>
</organism>
<evidence type="ECO:0000250" key="1">
    <source>
        <dbReference type="UniProtKB" id="Q53122"/>
    </source>
</evidence>
<evidence type="ECO:0000255" key="2">
    <source>
        <dbReference type="PROSITE-ProRule" id="PRU00628"/>
    </source>
</evidence>
<evidence type="ECO:0000269" key="3">
    <source>
    </source>
</evidence>
<evidence type="ECO:0000303" key="4">
    <source>
    </source>
</evidence>
<evidence type="ECO:0000305" key="5"/>
<evidence type="ECO:0000312" key="6">
    <source>
        <dbReference type="EMBL" id="ABE58361.1"/>
    </source>
</evidence>
<dbReference type="EC" id="1.14.13.251" evidence="3"/>
<dbReference type="EMBL" id="CP000285">
    <property type="protein sequence ID" value="ABE58361.1"/>
    <property type="molecule type" value="Genomic_DNA"/>
</dbReference>
<dbReference type="SMR" id="Q1QYU7"/>
<dbReference type="STRING" id="290398.Csal_1004"/>
<dbReference type="DNASU" id="4026227"/>
<dbReference type="KEGG" id="csa:Csal_1004"/>
<dbReference type="eggNOG" id="COG4638">
    <property type="taxonomic scope" value="Bacteria"/>
</dbReference>
<dbReference type="HOGENOM" id="CLU_026244_3_0_6"/>
<dbReference type="Proteomes" id="UP000000239">
    <property type="component" value="Chromosome"/>
</dbReference>
<dbReference type="GO" id="GO:0051537">
    <property type="term" value="F:2 iron, 2 sulfur cluster binding"/>
    <property type="evidence" value="ECO:0007669"/>
    <property type="project" value="UniProtKB-KW"/>
</dbReference>
<dbReference type="GO" id="GO:0005506">
    <property type="term" value="F:iron ion binding"/>
    <property type="evidence" value="ECO:0007669"/>
    <property type="project" value="InterPro"/>
</dbReference>
<dbReference type="GO" id="GO:0004497">
    <property type="term" value="F:monooxygenase activity"/>
    <property type="evidence" value="ECO:0007669"/>
    <property type="project" value="UniProtKB-KW"/>
</dbReference>
<dbReference type="CDD" id="cd08884">
    <property type="entry name" value="RHO_alpha_C_GbcA-like"/>
    <property type="match status" value="1"/>
</dbReference>
<dbReference type="CDD" id="cd03469">
    <property type="entry name" value="Rieske_RO_Alpha_N"/>
    <property type="match status" value="1"/>
</dbReference>
<dbReference type="Gene3D" id="3.90.380.10">
    <property type="entry name" value="Naphthalene 1,2-dioxygenase Alpha Subunit, Chain A, domain 1"/>
    <property type="match status" value="1"/>
</dbReference>
<dbReference type="Gene3D" id="2.102.10.10">
    <property type="entry name" value="Rieske [2Fe-2S] iron-sulphur domain"/>
    <property type="match status" value="1"/>
</dbReference>
<dbReference type="InterPro" id="IPR017941">
    <property type="entry name" value="Rieske_2Fe-2S"/>
</dbReference>
<dbReference type="InterPro" id="IPR036922">
    <property type="entry name" value="Rieske_2Fe-2S_sf"/>
</dbReference>
<dbReference type="InterPro" id="IPR015879">
    <property type="entry name" value="Ring_hydroxy_dOase_asu_C_dom"/>
</dbReference>
<dbReference type="InterPro" id="IPR001663">
    <property type="entry name" value="Rng_hydr_dOase-A"/>
</dbReference>
<dbReference type="PANTHER" id="PTHR43756">
    <property type="entry name" value="CHOLINE MONOOXYGENASE, CHLOROPLASTIC"/>
    <property type="match status" value="1"/>
</dbReference>
<dbReference type="PANTHER" id="PTHR43756:SF5">
    <property type="entry name" value="CHOLINE MONOOXYGENASE, CHLOROPLASTIC"/>
    <property type="match status" value="1"/>
</dbReference>
<dbReference type="Pfam" id="PF00355">
    <property type="entry name" value="Rieske"/>
    <property type="match status" value="1"/>
</dbReference>
<dbReference type="Pfam" id="PF00848">
    <property type="entry name" value="Ring_hydroxyl_A"/>
    <property type="match status" value="1"/>
</dbReference>
<dbReference type="PRINTS" id="PR00090">
    <property type="entry name" value="RNGDIOXGNASE"/>
</dbReference>
<dbReference type="SUPFAM" id="SSF55961">
    <property type="entry name" value="Bet v1-like"/>
    <property type="match status" value="1"/>
</dbReference>
<dbReference type="SUPFAM" id="SSF50022">
    <property type="entry name" value="ISP domain"/>
    <property type="match status" value="1"/>
</dbReference>
<dbReference type="PROSITE" id="PS51296">
    <property type="entry name" value="RIESKE"/>
    <property type="match status" value="1"/>
</dbReference>
<gene>
    <name evidence="4" type="primary">bmoA</name>
    <name evidence="6" type="ordered locus">Csal_1004</name>
</gene>
<comment type="function">
    <text evidence="3">Involved in degradation of glycine betaine (PubMed:29703733). Part of a Rieske-type oxygenase system that catalyzes the conversion of glycine betaine (GB) to dimethylglycine (DMG) (PubMed:29703733). This subunit is the terminal oxygenase component of the system (PubMed:29703733). Is specific for GB, and does not show any activity on choline, L-carnitine, stachydrine, dimethylglycine or sarcosine (PubMed:29703733). Activity is strictly dependent on NADH (PubMed:29703733).</text>
</comment>
<comment type="catalytic activity">
    <reaction evidence="3">
        <text>glycine betaine + NADH + O2 + H(+) = N,N-dimethylglycine + formaldehyde + NAD(+) + H2O</text>
        <dbReference type="Rhea" id="RHEA:45700"/>
        <dbReference type="ChEBI" id="CHEBI:15377"/>
        <dbReference type="ChEBI" id="CHEBI:15378"/>
        <dbReference type="ChEBI" id="CHEBI:15379"/>
        <dbReference type="ChEBI" id="CHEBI:16842"/>
        <dbReference type="ChEBI" id="CHEBI:17750"/>
        <dbReference type="ChEBI" id="CHEBI:57540"/>
        <dbReference type="ChEBI" id="CHEBI:57945"/>
        <dbReference type="ChEBI" id="CHEBI:58251"/>
        <dbReference type="EC" id="1.14.13.251"/>
    </reaction>
    <physiologicalReaction direction="left-to-right" evidence="3">
        <dbReference type="Rhea" id="RHEA:45701"/>
    </physiologicalReaction>
</comment>
<comment type="cofactor">
    <cofactor evidence="3">
        <name>[2Fe-2S] cluster</name>
        <dbReference type="ChEBI" id="CHEBI:190135"/>
    </cofactor>
    <text evidence="3">Binds 1 [2Fe-2S] cluster per subunit.</text>
</comment>
<comment type="cofactor">
    <cofactor evidence="3">
        <name>Fe cation</name>
        <dbReference type="ChEBI" id="CHEBI:24875"/>
    </cofactor>
    <text evidence="3">Binds 1 Fe cation per subunit.</text>
</comment>
<comment type="activity regulation">
    <text evidence="3">Activity is absolutely dependent on the presence of BmoB (PubMed:29703733). Glycine betaine monooxygenase activity is significantly enhanced by Fe(2+) and severely inhibited by heavy-metal ions, including Co(2+), Mn(2+), Zn(2+), Cu(2+) and Ag(+) (PubMed:29703733). Severely inhibited by EDTA (PubMed:29703733).</text>
</comment>
<comment type="biophysicochemical properties">
    <kinetics>
        <KM evidence="3">1.2 mM for glycine betaine</KM>
        <text evidence="3">kcat is 0.65 sec(-1) with glycine betaine as substrate.</text>
    </kinetics>
    <phDependence>
        <text evidence="3">Optimum pH is 7.5.</text>
    </phDependence>
    <temperatureDependence>
        <text evidence="3">Optimum temperature is 30 degrees Celsius.</text>
    </temperatureDependence>
</comment>
<comment type="subunit">
    <text evidence="3">Homotrimer (PubMed:29703733). The system is composed of an oxygenase subunit (BmoA) and a reductase subunit (BmoB) (PubMed:29703733). Maximal specific activity is obtained when the ratio of BmoA to BmoB is 5:1 (PubMed:29703733).</text>
</comment>
<comment type="disruption phenotype">
    <text evidence="3">Can use glucose or dimethylglycine as the sole carbon source, but is incapable of growth on glycine betaine as the sole source of carbon.</text>
</comment>
<comment type="similarity">
    <text evidence="5">Belongs to the bacterial ring-hydroxylating dioxygenase alpha subunit family.</text>
</comment>